<dbReference type="EC" id="1.4.4.2"/>
<dbReference type="EMBL" id="D84432">
    <property type="protein sequence ID" value="BAA12547.1"/>
    <property type="molecule type" value="Genomic_DNA"/>
</dbReference>
<dbReference type="EMBL" id="AL009126">
    <property type="protein sequence ID" value="CAB14387.2"/>
    <property type="molecule type" value="Genomic_DNA"/>
</dbReference>
<dbReference type="PIR" id="A69959">
    <property type="entry name" value="A69959"/>
</dbReference>
<dbReference type="RefSeq" id="NP_390336.2">
    <property type="nucleotide sequence ID" value="NC_000964.3"/>
</dbReference>
<dbReference type="RefSeq" id="WP_003230207.1">
    <property type="nucleotide sequence ID" value="NZ_OZ025638.1"/>
</dbReference>
<dbReference type="SMR" id="P54376"/>
<dbReference type="FunCoup" id="P54376">
    <property type="interactions" value="132"/>
</dbReference>
<dbReference type="STRING" id="224308.BSU24560"/>
<dbReference type="jPOST" id="P54376"/>
<dbReference type="PaxDb" id="224308-BSU24560"/>
<dbReference type="EnsemblBacteria" id="CAB14387">
    <property type="protein sequence ID" value="CAB14387"/>
    <property type="gene ID" value="BSU_24560"/>
</dbReference>
<dbReference type="GeneID" id="938546"/>
<dbReference type="KEGG" id="bsu:BSU24560"/>
<dbReference type="PATRIC" id="fig|224308.179.peg.2674"/>
<dbReference type="eggNOG" id="COG0403">
    <property type="taxonomic scope" value="Bacteria"/>
</dbReference>
<dbReference type="InParanoid" id="P54376"/>
<dbReference type="OrthoDB" id="9771867at2"/>
<dbReference type="PhylomeDB" id="P54376"/>
<dbReference type="BioCyc" id="BSUB:BSU24560-MONOMER"/>
<dbReference type="Proteomes" id="UP000001570">
    <property type="component" value="Chromosome"/>
</dbReference>
<dbReference type="GO" id="GO:0004375">
    <property type="term" value="F:glycine dehydrogenase (decarboxylating) activity"/>
    <property type="evidence" value="ECO:0007669"/>
    <property type="project" value="UniProtKB-EC"/>
</dbReference>
<dbReference type="GO" id="GO:0019464">
    <property type="term" value="P:glycine decarboxylation via glycine cleavage system"/>
    <property type="evidence" value="ECO:0007669"/>
    <property type="project" value="UniProtKB-UniRule"/>
</dbReference>
<dbReference type="GO" id="GO:0009116">
    <property type="term" value="P:nucleoside metabolic process"/>
    <property type="evidence" value="ECO:0007669"/>
    <property type="project" value="InterPro"/>
</dbReference>
<dbReference type="CDD" id="cd00613">
    <property type="entry name" value="GDC-P"/>
    <property type="match status" value="1"/>
</dbReference>
<dbReference type="FunFam" id="3.40.640.10:FF:000113">
    <property type="entry name" value="Probable glycine dehydrogenase (decarboxylating) subunit 1"/>
    <property type="match status" value="1"/>
</dbReference>
<dbReference type="Gene3D" id="3.90.1150.10">
    <property type="entry name" value="Aspartate Aminotransferase, domain 1"/>
    <property type="match status" value="1"/>
</dbReference>
<dbReference type="Gene3D" id="3.40.640.10">
    <property type="entry name" value="Type I PLP-dependent aspartate aminotransferase-like (Major domain)"/>
    <property type="match status" value="1"/>
</dbReference>
<dbReference type="HAMAP" id="MF_00712">
    <property type="entry name" value="GcvPA"/>
    <property type="match status" value="1"/>
</dbReference>
<dbReference type="InterPro" id="IPR023010">
    <property type="entry name" value="GcvPA"/>
</dbReference>
<dbReference type="InterPro" id="IPR049315">
    <property type="entry name" value="GDC-P_N"/>
</dbReference>
<dbReference type="InterPro" id="IPR020581">
    <property type="entry name" value="GDC_P"/>
</dbReference>
<dbReference type="InterPro" id="IPR015424">
    <property type="entry name" value="PyrdxlP-dep_Trfase"/>
</dbReference>
<dbReference type="InterPro" id="IPR015421">
    <property type="entry name" value="PyrdxlP-dep_Trfase_major"/>
</dbReference>
<dbReference type="InterPro" id="IPR015422">
    <property type="entry name" value="PyrdxlP-dep_Trfase_small"/>
</dbReference>
<dbReference type="NCBIfam" id="NF001696">
    <property type="entry name" value="PRK00451.1"/>
    <property type="match status" value="1"/>
</dbReference>
<dbReference type="PANTHER" id="PTHR42806">
    <property type="entry name" value="GLYCINE CLEAVAGE SYSTEM P-PROTEIN"/>
    <property type="match status" value="1"/>
</dbReference>
<dbReference type="PANTHER" id="PTHR42806:SF1">
    <property type="entry name" value="GLYCINE DEHYDROGENASE (DECARBOXYLATING)"/>
    <property type="match status" value="1"/>
</dbReference>
<dbReference type="Pfam" id="PF02347">
    <property type="entry name" value="GDC-P"/>
    <property type="match status" value="1"/>
</dbReference>
<dbReference type="PIRSF" id="PIRSF006815">
    <property type="entry name" value="GcvPA"/>
    <property type="match status" value="1"/>
</dbReference>
<dbReference type="SUPFAM" id="SSF53383">
    <property type="entry name" value="PLP-dependent transferases"/>
    <property type="match status" value="1"/>
</dbReference>
<evidence type="ECO:0000250" key="1"/>
<evidence type="ECO:0000305" key="2"/>
<name>GCSPA_BACSU</name>
<feature type="chain" id="PRO_0000166961" description="Probable glycine dehydrogenase (decarboxylating) subunit 1">
    <location>
        <begin position="1"/>
        <end position="448"/>
    </location>
</feature>
<feature type="sequence conflict" description="In Ref. 1; BAA12547." evidence="2" ref="1">
    <original>QP</original>
    <variation>HR</variation>
    <location>
        <begin position="265"/>
        <end position="266"/>
    </location>
</feature>
<accession>P54376</accession>
<sequence>MKHRYLPATEKDKQEMLATIGVSSIDDLFADIPENVKYKKEHQIKKAKSETELTRELTKLASKNRDTVQYASFLGAGVYDHYQPVIVDHVISRSEFYTAYTPYQPEISQGELQAIFEFQTMICELTGMDIANSSMYDGGTALAEAAMLASGHTKKKKIVVSKTVHPESREVLKTYAKGQYIDVVEVPAADGVTDLDALRQTVCENTAAVIVQYPNFFGRIEPLKDIEPIAHQGKSMFIVSANPLALGLLTPPGKFQSDIVVGDAQPFGIPSAYGGPHCGFFAVTKKLMRKVPGRLVGQTEDENGKRGFVLTLQAREQHIRRDKATSNICSNQALNALAASVAMTALGKNGVKDIARQNLLKANYAKQEAKKAGLTVMFDGPMFNEFVIKLDEPVRAVNKRLLAKGMIGGYDLGLTYPELDCHMLIAVTELRTKEEIDALIQELGDRHE</sequence>
<comment type="function">
    <text evidence="1">The glycine cleavage system catalyzes the degradation of glycine. The P protein binds the alpha-amino group of glycine through its pyridoxal phosphate cofactor; CO(2) is released and the remaining methylamine moiety is then transferred to the lipoamide cofactor of the H protein (By similarity).</text>
</comment>
<comment type="catalytic activity">
    <reaction>
        <text>N(6)-[(R)-lipoyl]-L-lysyl-[glycine-cleavage complex H protein] + glycine + H(+) = N(6)-[(R)-S(8)-aminomethyldihydrolipoyl]-L-lysyl-[glycine-cleavage complex H protein] + CO2</text>
        <dbReference type="Rhea" id="RHEA:24304"/>
        <dbReference type="Rhea" id="RHEA-COMP:10494"/>
        <dbReference type="Rhea" id="RHEA-COMP:10495"/>
        <dbReference type="ChEBI" id="CHEBI:15378"/>
        <dbReference type="ChEBI" id="CHEBI:16526"/>
        <dbReference type="ChEBI" id="CHEBI:57305"/>
        <dbReference type="ChEBI" id="CHEBI:83099"/>
        <dbReference type="ChEBI" id="CHEBI:83143"/>
        <dbReference type="EC" id="1.4.4.2"/>
    </reaction>
</comment>
<comment type="subunit">
    <text>The glycine cleavage system is composed of four proteins: P, T, L and H. In this organism, the P 'protein' is a heterodimer of two subunits.</text>
</comment>
<comment type="similarity">
    <text evidence="2">Belongs to the GcvP family. N-terminal subunit subfamily.</text>
</comment>
<protein>
    <recommendedName>
        <fullName>Probable glycine dehydrogenase (decarboxylating) subunit 1</fullName>
        <ecNumber>1.4.4.2</ecNumber>
    </recommendedName>
    <alternativeName>
        <fullName>Glycine cleavage system P-protein subunit 1</fullName>
    </alternativeName>
    <alternativeName>
        <fullName>Glycine decarboxylase subunit 1</fullName>
    </alternativeName>
    <alternativeName>
        <fullName>Glycine dehydrogenase (aminomethyl-transferring) subunit 1</fullName>
    </alternativeName>
</protein>
<reference key="1">
    <citation type="journal article" date="1996" name="Microbiology">
        <title>Systematic sequencing of the 283 kb 210 degrees-232 degrees region of the Bacillus subtilis genome containing the skin element and many sporulation genes.</title>
        <authorList>
            <person name="Mizuno M."/>
            <person name="Masuda S."/>
            <person name="Takemaru K."/>
            <person name="Hosono S."/>
            <person name="Sato T."/>
            <person name="Takeuchi M."/>
            <person name="Kobayashi Y."/>
        </authorList>
    </citation>
    <scope>NUCLEOTIDE SEQUENCE [GENOMIC DNA]</scope>
    <source>
        <strain>168 / JH642</strain>
    </source>
</reference>
<reference key="2">
    <citation type="journal article" date="1997" name="Nature">
        <title>The complete genome sequence of the Gram-positive bacterium Bacillus subtilis.</title>
        <authorList>
            <person name="Kunst F."/>
            <person name="Ogasawara N."/>
            <person name="Moszer I."/>
            <person name="Albertini A.M."/>
            <person name="Alloni G."/>
            <person name="Azevedo V."/>
            <person name="Bertero M.G."/>
            <person name="Bessieres P."/>
            <person name="Bolotin A."/>
            <person name="Borchert S."/>
            <person name="Borriss R."/>
            <person name="Boursier L."/>
            <person name="Brans A."/>
            <person name="Braun M."/>
            <person name="Brignell S.C."/>
            <person name="Bron S."/>
            <person name="Brouillet S."/>
            <person name="Bruschi C.V."/>
            <person name="Caldwell B."/>
            <person name="Capuano V."/>
            <person name="Carter N.M."/>
            <person name="Choi S.-K."/>
            <person name="Codani J.-J."/>
            <person name="Connerton I.F."/>
            <person name="Cummings N.J."/>
            <person name="Daniel R.A."/>
            <person name="Denizot F."/>
            <person name="Devine K.M."/>
            <person name="Duesterhoeft A."/>
            <person name="Ehrlich S.D."/>
            <person name="Emmerson P.T."/>
            <person name="Entian K.-D."/>
            <person name="Errington J."/>
            <person name="Fabret C."/>
            <person name="Ferrari E."/>
            <person name="Foulger D."/>
            <person name="Fritz C."/>
            <person name="Fujita M."/>
            <person name="Fujita Y."/>
            <person name="Fuma S."/>
            <person name="Galizzi A."/>
            <person name="Galleron N."/>
            <person name="Ghim S.-Y."/>
            <person name="Glaser P."/>
            <person name="Goffeau A."/>
            <person name="Golightly E.J."/>
            <person name="Grandi G."/>
            <person name="Guiseppi G."/>
            <person name="Guy B.J."/>
            <person name="Haga K."/>
            <person name="Haiech J."/>
            <person name="Harwood C.R."/>
            <person name="Henaut A."/>
            <person name="Hilbert H."/>
            <person name="Holsappel S."/>
            <person name="Hosono S."/>
            <person name="Hullo M.-F."/>
            <person name="Itaya M."/>
            <person name="Jones L.-M."/>
            <person name="Joris B."/>
            <person name="Karamata D."/>
            <person name="Kasahara Y."/>
            <person name="Klaerr-Blanchard M."/>
            <person name="Klein C."/>
            <person name="Kobayashi Y."/>
            <person name="Koetter P."/>
            <person name="Koningstein G."/>
            <person name="Krogh S."/>
            <person name="Kumano M."/>
            <person name="Kurita K."/>
            <person name="Lapidus A."/>
            <person name="Lardinois S."/>
            <person name="Lauber J."/>
            <person name="Lazarevic V."/>
            <person name="Lee S.-M."/>
            <person name="Levine A."/>
            <person name="Liu H."/>
            <person name="Masuda S."/>
            <person name="Mauel C."/>
            <person name="Medigue C."/>
            <person name="Medina N."/>
            <person name="Mellado R.P."/>
            <person name="Mizuno M."/>
            <person name="Moestl D."/>
            <person name="Nakai S."/>
            <person name="Noback M."/>
            <person name="Noone D."/>
            <person name="O'Reilly M."/>
            <person name="Ogawa K."/>
            <person name="Ogiwara A."/>
            <person name="Oudega B."/>
            <person name="Park S.-H."/>
            <person name="Parro V."/>
            <person name="Pohl T.M."/>
            <person name="Portetelle D."/>
            <person name="Porwollik S."/>
            <person name="Prescott A.M."/>
            <person name="Presecan E."/>
            <person name="Pujic P."/>
            <person name="Purnelle B."/>
            <person name="Rapoport G."/>
            <person name="Rey M."/>
            <person name="Reynolds S."/>
            <person name="Rieger M."/>
            <person name="Rivolta C."/>
            <person name="Rocha E."/>
            <person name="Roche B."/>
            <person name="Rose M."/>
            <person name="Sadaie Y."/>
            <person name="Sato T."/>
            <person name="Scanlan E."/>
            <person name="Schleich S."/>
            <person name="Schroeter R."/>
            <person name="Scoffone F."/>
            <person name="Sekiguchi J."/>
            <person name="Sekowska A."/>
            <person name="Seror S.J."/>
            <person name="Serror P."/>
            <person name="Shin B.-S."/>
            <person name="Soldo B."/>
            <person name="Sorokin A."/>
            <person name="Tacconi E."/>
            <person name="Takagi T."/>
            <person name="Takahashi H."/>
            <person name="Takemaru K."/>
            <person name="Takeuchi M."/>
            <person name="Tamakoshi A."/>
            <person name="Tanaka T."/>
            <person name="Terpstra P."/>
            <person name="Tognoni A."/>
            <person name="Tosato V."/>
            <person name="Uchiyama S."/>
            <person name="Vandenbol M."/>
            <person name="Vannier F."/>
            <person name="Vassarotti A."/>
            <person name="Viari A."/>
            <person name="Wambutt R."/>
            <person name="Wedler E."/>
            <person name="Wedler H."/>
            <person name="Weitzenegger T."/>
            <person name="Winters P."/>
            <person name="Wipat A."/>
            <person name="Yamamoto H."/>
            <person name="Yamane K."/>
            <person name="Yasumoto K."/>
            <person name="Yata K."/>
            <person name="Yoshida K."/>
            <person name="Yoshikawa H.-F."/>
            <person name="Zumstein E."/>
            <person name="Yoshikawa H."/>
            <person name="Danchin A."/>
        </authorList>
    </citation>
    <scope>NUCLEOTIDE SEQUENCE [LARGE SCALE GENOMIC DNA]</scope>
    <source>
        <strain>168</strain>
    </source>
</reference>
<reference key="3">
    <citation type="journal article" date="2009" name="Microbiology">
        <title>From a consortium sequence to a unified sequence: the Bacillus subtilis 168 reference genome a decade later.</title>
        <authorList>
            <person name="Barbe V."/>
            <person name="Cruveiller S."/>
            <person name="Kunst F."/>
            <person name="Lenoble P."/>
            <person name="Meurice G."/>
            <person name="Sekowska A."/>
            <person name="Vallenet D."/>
            <person name="Wang T."/>
            <person name="Moszer I."/>
            <person name="Medigue C."/>
            <person name="Danchin A."/>
        </authorList>
    </citation>
    <scope>SEQUENCE REVISION TO 265-266</scope>
</reference>
<keyword id="KW-0560">Oxidoreductase</keyword>
<keyword id="KW-1185">Reference proteome</keyword>
<proteinExistence type="inferred from homology"/>
<organism>
    <name type="scientific">Bacillus subtilis (strain 168)</name>
    <dbReference type="NCBI Taxonomy" id="224308"/>
    <lineage>
        <taxon>Bacteria</taxon>
        <taxon>Bacillati</taxon>
        <taxon>Bacillota</taxon>
        <taxon>Bacilli</taxon>
        <taxon>Bacillales</taxon>
        <taxon>Bacillaceae</taxon>
        <taxon>Bacillus</taxon>
    </lineage>
</organism>
<gene>
    <name type="primary">gcvPA</name>
    <name type="synonym">yqhJ</name>
    <name type="ordered locus">BSU24560</name>
</gene>